<gene>
    <name evidence="1" type="primary">trmD</name>
    <name type="ordered locus">Mmc1_0506</name>
</gene>
<protein>
    <recommendedName>
        <fullName evidence="1">tRNA (guanine-N(1)-)-methyltransferase</fullName>
        <ecNumber evidence="1">2.1.1.228</ecNumber>
    </recommendedName>
    <alternativeName>
        <fullName evidence="1">M1G-methyltransferase</fullName>
    </alternativeName>
    <alternativeName>
        <fullName evidence="1">tRNA [GM37] methyltransferase</fullName>
    </alternativeName>
</protein>
<accession>A0L4Y8</accession>
<evidence type="ECO:0000255" key="1">
    <source>
        <dbReference type="HAMAP-Rule" id="MF_00605"/>
    </source>
</evidence>
<organism>
    <name type="scientific">Magnetococcus marinus (strain ATCC BAA-1437 / JCM 17883 / MC-1)</name>
    <dbReference type="NCBI Taxonomy" id="156889"/>
    <lineage>
        <taxon>Bacteria</taxon>
        <taxon>Pseudomonadati</taxon>
        <taxon>Pseudomonadota</taxon>
        <taxon>Alphaproteobacteria</taxon>
        <taxon>Magnetococcales</taxon>
        <taxon>Magnetococcaceae</taxon>
        <taxon>Magnetococcus</taxon>
    </lineage>
</organism>
<name>TRMD_MAGMM</name>
<keyword id="KW-0963">Cytoplasm</keyword>
<keyword id="KW-0489">Methyltransferase</keyword>
<keyword id="KW-1185">Reference proteome</keyword>
<keyword id="KW-0949">S-adenosyl-L-methionine</keyword>
<keyword id="KW-0808">Transferase</keyword>
<keyword id="KW-0819">tRNA processing</keyword>
<feature type="chain" id="PRO_1000006495" description="tRNA (guanine-N(1)-)-methyltransferase">
    <location>
        <begin position="1"/>
        <end position="252"/>
    </location>
</feature>
<feature type="binding site" evidence="1">
    <location>
        <position position="110"/>
    </location>
    <ligand>
        <name>S-adenosyl-L-methionine</name>
        <dbReference type="ChEBI" id="CHEBI:59789"/>
    </ligand>
</feature>
<feature type="binding site" evidence="1">
    <location>
        <begin position="130"/>
        <end position="135"/>
    </location>
    <ligand>
        <name>S-adenosyl-L-methionine</name>
        <dbReference type="ChEBI" id="CHEBI:59789"/>
    </ligand>
</feature>
<dbReference type="EC" id="2.1.1.228" evidence="1"/>
<dbReference type="EMBL" id="CP000471">
    <property type="protein sequence ID" value="ABK43031.1"/>
    <property type="molecule type" value="Genomic_DNA"/>
</dbReference>
<dbReference type="RefSeq" id="WP_011712198.1">
    <property type="nucleotide sequence ID" value="NC_008576.1"/>
</dbReference>
<dbReference type="SMR" id="A0L4Y8"/>
<dbReference type="STRING" id="156889.Mmc1_0506"/>
<dbReference type="KEGG" id="mgm:Mmc1_0506"/>
<dbReference type="eggNOG" id="COG0336">
    <property type="taxonomic scope" value="Bacteria"/>
</dbReference>
<dbReference type="HOGENOM" id="CLU_047363_0_1_5"/>
<dbReference type="OrthoDB" id="9807416at2"/>
<dbReference type="Proteomes" id="UP000002586">
    <property type="component" value="Chromosome"/>
</dbReference>
<dbReference type="GO" id="GO:0005829">
    <property type="term" value="C:cytosol"/>
    <property type="evidence" value="ECO:0007669"/>
    <property type="project" value="TreeGrafter"/>
</dbReference>
<dbReference type="GO" id="GO:0052906">
    <property type="term" value="F:tRNA (guanine(37)-N1)-methyltransferase activity"/>
    <property type="evidence" value="ECO:0007669"/>
    <property type="project" value="UniProtKB-UniRule"/>
</dbReference>
<dbReference type="GO" id="GO:0002939">
    <property type="term" value="P:tRNA N1-guanine methylation"/>
    <property type="evidence" value="ECO:0007669"/>
    <property type="project" value="TreeGrafter"/>
</dbReference>
<dbReference type="CDD" id="cd18080">
    <property type="entry name" value="TrmD-like"/>
    <property type="match status" value="1"/>
</dbReference>
<dbReference type="FunFam" id="3.40.1280.10:FF:000001">
    <property type="entry name" value="tRNA (guanine-N(1)-)-methyltransferase"/>
    <property type="match status" value="1"/>
</dbReference>
<dbReference type="Gene3D" id="3.40.1280.10">
    <property type="match status" value="1"/>
</dbReference>
<dbReference type="Gene3D" id="1.10.1270.20">
    <property type="entry name" value="tRNA(m1g37)methyltransferase, domain 2"/>
    <property type="match status" value="1"/>
</dbReference>
<dbReference type="HAMAP" id="MF_00605">
    <property type="entry name" value="TrmD"/>
    <property type="match status" value="1"/>
</dbReference>
<dbReference type="InterPro" id="IPR029028">
    <property type="entry name" value="Alpha/beta_knot_MTases"/>
</dbReference>
<dbReference type="InterPro" id="IPR023148">
    <property type="entry name" value="tRNA_m1G_MeTrfase_C_sf"/>
</dbReference>
<dbReference type="InterPro" id="IPR002649">
    <property type="entry name" value="tRNA_m1G_MeTrfase_TrmD"/>
</dbReference>
<dbReference type="InterPro" id="IPR029026">
    <property type="entry name" value="tRNA_m1G_MTases_N"/>
</dbReference>
<dbReference type="InterPro" id="IPR016009">
    <property type="entry name" value="tRNA_MeTrfase_TRMD/TRM10"/>
</dbReference>
<dbReference type="NCBIfam" id="NF000648">
    <property type="entry name" value="PRK00026.1"/>
    <property type="match status" value="1"/>
</dbReference>
<dbReference type="NCBIfam" id="TIGR00088">
    <property type="entry name" value="trmD"/>
    <property type="match status" value="1"/>
</dbReference>
<dbReference type="PANTHER" id="PTHR46417">
    <property type="entry name" value="TRNA (GUANINE-N(1)-)-METHYLTRANSFERASE"/>
    <property type="match status" value="1"/>
</dbReference>
<dbReference type="PANTHER" id="PTHR46417:SF1">
    <property type="entry name" value="TRNA (GUANINE-N(1)-)-METHYLTRANSFERASE"/>
    <property type="match status" value="1"/>
</dbReference>
<dbReference type="Pfam" id="PF01746">
    <property type="entry name" value="tRNA_m1G_MT"/>
    <property type="match status" value="1"/>
</dbReference>
<dbReference type="PIRSF" id="PIRSF000386">
    <property type="entry name" value="tRNA_mtase"/>
    <property type="match status" value="1"/>
</dbReference>
<dbReference type="SUPFAM" id="SSF75217">
    <property type="entry name" value="alpha/beta knot"/>
    <property type="match status" value="1"/>
</dbReference>
<sequence length="252" mass="27716">MRFSILTLFPEMFAPLQASILGRGQKSGRLDLNLVQIRDFATDRHQNVDDTPFGGGPGMVLKPDILSHALRATLQGETAHVVYMSPQGSRFDQATAQRLAGYGHVVLLCGRYEGVDERFIDAHVDEELSVGDFVLTGGELPAMMVVDAVSRMVPGVLGDLESAQADSFQTGLLDHPHYTRPAHWVVDGDHYGAPEVLLSGNHGAIAEWRRRQALLRTLIRRPDLLGKAPLSRVEKRLIEALAVDLDALENKH</sequence>
<reference key="1">
    <citation type="journal article" date="2009" name="Appl. Environ. Microbiol.">
        <title>Complete genome sequence of the chemolithoautotrophic marine magnetotactic coccus strain MC-1.</title>
        <authorList>
            <person name="Schubbe S."/>
            <person name="Williams T.J."/>
            <person name="Xie G."/>
            <person name="Kiss H.E."/>
            <person name="Brettin T.S."/>
            <person name="Martinez D."/>
            <person name="Ross C.A."/>
            <person name="Schuler D."/>
            <person name="Cox B.L."/>
            <person name="Nealson K.H."/>
            <person name="Bazylinski D.A."/>
        </authorList>
    </citation>
    <scope>NUCLEOTIDE SEQUENCE [LARGE SCALE GENOMIC DNA]</scope>
    <source>
        <strain>ATCC BAA-1437 / JCM 17883 / MC-1</strain>
    </source>
</reference>
<proteinExistence type="inferred from homology"/>
<comment type="function">
    <text evidence="1">Specifically methylates guanosine-37 in various tRNAs.</text>
</comment>
<comment type="catalytic activity">
    <reaction evidence="1">
        <text>guanosine(37) in tRNA + S-adenosyl-L-methionine = N(1)-methylguanosine(37) in tRNA + S-adenosyl-L-homocysteine + H(+)</text>
        <dbReference type="Rhea" id="RHEA:36899"/>
        <dbReference type="Rhea" id="RHEA-COMP:10145"/>
        <dbReference type="Rhea" id="RHEA-COMP:10147"/>
        <dbReference type="ChEBI" id="CHEBI:15378"/>
        <dbReference type="ChEBI" id="CHEBI:57856"/>
        <dbReference type="ChEBI" id="CHEBI:59789"/>
        <dbReference type="ChEBI" id="CHEBI:73542"/>
        <dbReference type="ChEBI" id="CHEBI:74269"/>
        <dbReference type="EC" id="2.1.1.228"/>
    </reaction>
</comment>
<comment type="subunit">
    <text evidence="1">Homodimer.</text>
</comment>
<comment type="subcellular location">
    <subcellularLocation>
        <location evidence="1">Cytoplasm</location>
    </subcellularLocation>
</comment>
<comment type="similarity">
    <text evidence="1">Belongs to the RNA methyltransferase TrmD family.</text>
</comment>